<keyword id="KW-0963">Cytoplasm</keyword>
<keyword id="KW-0808">Transferase</keyword>
<evidence type="ECO:0000255" key="1">
    <source>
        <dbReference type="PROSITE-ProRule" id="PRU01137"/>
    </source>
</evidence>
<evidence type="ECO:0000305" key="2"/>
<name>MADD_MALRU</name>
<feature type="chain" id="PRO_0000424276" description="Malonyl-S-ACP:biotin-protein carboxyltransferase MADD">
    <location>
        <begin position="1"/>
        <end position="292"/>
    </location>
</feature>
<feature type="domain" description="CoA carboxyltransferase C-terminal" evidence="1">
    <location>
        <begin position="1"/>
        <end position="281"/>
    </location>
</feature>
<reference key="1">
    <citation type="journal article" date="1997" name="Eur. J. Biochem.">
        <title>Sequence of a gene cluster from Malonomonas rubra encoding components of the malonate decarboxylase Na+ pump and evidence for their function.</title>
        <authorList>
            <person name="Berg M."/>
            <person name="Hilbi H."/>
            <person name="Dimroth P."/>
        </authorList>
    </citation>
    <scope>NUCLEOTIDE SEQUENCE [GENOMIC DNA]</scope>
    <scope>CHARACTERIZATION</scope>
</reference>
<gene>
    <name type="primary">madD</name>
</gene>
<comment type="function">
    <text>Gamma subunit of the biotin-dependent malonate decarboxylase multienzyme complex (EC 7.2.4.4). The two subunits MADC and MADD are required for the transfer of the malonate carboxy group from the acyl-carrier protein (ACP) to the prosthetic group of the biotin carrier MADF. Required for the regeneration of ACP.</text>
</comment>
<comment type="catalytic activity">
    <reaction>
        <text>N(6)-biotinyl-L-lysyl-[protein] + malonyl-[ACP] = N(6)-carboxybiotinyl-L-lysyl-[protein] + acetyl-[ACP]</text>
        <dbReference type="Rhea" id="RHEA:23028"/>
        <dbReference type="Rhea" id="RHEA-COMP:9621"/>
        <dbReference type="Rhea" id="RHEA-COMP:9623"/>
        <dbReference type="Rhea" id="RHEA-COMP:10505"/>
        <dbReference type="Rhea" id="RHEA-COMP:10506"/>
        <dbReference type="ChEBI" id="CHEBI:78446"/>
        <dbReference type="ChEBI" id="CHEBI:78449"/>
        <dbReference type="ChEBI" id="CHEBI:83144"/>
        <dbReference type="ChEBI" id="CHEBI:83145"/>
        <dbReference type="EC" id="2.1.3.10"/>
    </reaction>
</comment>
<comment type="subcellular location">
    <subcellularLocation>
        <location evidence="2">Cytoplasm</location>
    </subcellularLocation>
</comment>
<sequence length="292" mass="31829">MEIMMGQGRLAIEKIVDPESFKENTIGESSFEDNEVGPGAVVGTAQIGDQDCTIIASDAMAMNERFPVVYAGIIGLEEGYKMAMAVYKTIEADKEKKGTEKRPILLIVDTPGNGPGKQEEIFGMNKSTGAYQLALAEARKAGHPIVAMVIGRAISGAFLCHGLQADRILSLSSKFETMIHVMPLTSVSVITKLDIERLEELSKTNPVFAAGPDFFYQLGGVEELVEEVDGMRSCILKHIAEIREMKAAGEEARLGPWGRGALGEQRGGRMIRGKVMAMMDKQFFAFAEQNLY</sequence>
<proteinExistence type="evidence at protein level"/>
<dbReference type="EC" id="2.1.3.10"/>
<dbReference type="EMBL" id="U87980">
    <property type="protein sequence ID" value="AAC45403.1"/>
    <property type="molecule type" value="Genomic_DNA"/>
</dbReference>
<dbReference type="SMR" id="O06927"/>
<dbReference type="TCDB" id="3.B.1.1.4">
    <property type="family name" value="the na(+)-transporting carboxylic acid decarboxylase (nat-dc) family"/>
</dbReference>
<dbReference type="KEGG" id="ag:AAC45403"/>
<dbReference type="BioCyc" id="MetaCyc:MONOMER-14256"/>
<dbReference type="GO" id="GO:0005737">
    <property type="term" value="C:cytoplasm"/>
    <property type="evidence" value="ECO:0007669"/>
    <property type="project" value="UniProtKB-SubCell"/>
</dbReference>
<dbReference type="GO" id="GO:0016874">
    <property type="term" value="F:ligase activity"/>
    <property type="evidence" value="ECO:0007669"/>
    <property type="project" value="InterPro"/>
</dbReference>
<dbReference type="GO" id="GO:0016740">
    <property type="term" value="F:transferase activity"/>
    <property type="evidence" value="ECO:0007669"/>
    <property type="project" value="UniProtKB-KW"/>
</dbReference>
<dbReference type="GO" id="GO:0005975">
    <property type="term" value="P:carbohydrate metabolic process"/>
    <property type="evidence" value="ECO:0007669"/>
    <property type="project" value="InterPro"/>
</dbReference>
<dbReference type="Gene3D" id="3.90.226.10">
    <property type="entry name" value="2-enoyl-CoA Hydratase, Chain A, domain 1"/>
    <property type="match status" value="1"/>
</dbReference>
<dbReference type="InterPro" id="IPR029045">
    <property type="entry name" value="ClpP/crotonase-like_dom_sf"/>
</dbReference>
<dbReference type="InterPro" id="IPR011763">
    <property type="entry name" value="COA_CT_C"/>
</dbReference>
<dbReference type="InterPro" id="IPR009648">
    <property type="entry name" value="Malonate_gamma"/>
</dbReference>
<dbReference type="NCBIfam" id="TIGR03134">
    <property type="entry name" value="malonate_gamma"/>
    <property type="match status" value="1"/>
</dbReference>
<dbReference type="Pfam" id="PF06833">
    <property type="entry name" value="MdcE"/>
    <property type="match status" value="1"/>
</dbReference>
<dbReference type="SUPFAM" id="SSF52096">
    <property type="entry name" value="ClpP/crotonase"/>
    <property type="match status" value="1"/>
</dbReference>
<dbReference type="PROSITE" id="PS50989">
    <property type="entry name" value="COA_CT_CTER"/>
    <property type="match status" value="1"/>
</dbReference>
<accession>O06927</accession>
<organism>
    <name type="scientific">Malonomonas rubra</name>
    <dbReference type="NCBI Taxonomy" id="57040"/>
    <lineage>
        <taxon>Bacteria</taxon>
        <taxon>Pseudomonadati</taxon>
        <taxon>Thermodesulfobacteriota</taxon>
        <taxon>Desulfuromonadia</taxon>
        <taxon>Desulfuromonadales</taxon>
        <taxon>Geopsychrobacteraceae</taxon>
        <taxon>Malonomonas</taxon>
    </lineage>
</organism>
<protein>
    <recommendedName>
        <fullName>Malonyl-S-ACP:biotin-protein carboxyltransferase MADD</fullName>
        <ecNumber>2.1.3.10</ecNumber>
    </recommendedName>
</protein>